<comment type="function">
    <text evidence="1">Catalyzes the conversion of L-lactate to pyruvate. Is coupled to the respiratory chain.</text>
</comment>
<comment type="catalytic activity">
    <reaction evidence="1">
        <text>(S)-lactate + A = pyruvate + AH2</text>
        <dbReference type="Rhea" id="RHEA:45816"/>
        <dbReference type="ChEBI" id="CHEBI:13193"/>
        <dbReference type="ChEBI" id="CHEBI:15361"/>
        <dbReference type="ChEBI" id="CHEBI:16651"/>
        <dbReference type="ChEBI" id="CHEBI:17499"/>
    </reaction>
</comment>
<comment type="cofactor">
    <cofactor evidence="1">
        <name>FMN</name>
        <dbReference type="ChEBI" id="CHEBI:58210"/>
    </cofactor>
</comment>
<comment type="subcellular location">
    <subcellularLocation>
        <location evidence="1">Cell inner membrane</location>
        <topology evidence="1">Peripheral membrane protein</topology>
    </subcellularLocation>
</comment>
<comment type="similarity">
    <text evidence="1">Belongs to the FMN-dependent alpha-hydroxy acid dehydrogenase family.</text>
</comment>
<reference key="1">
    <citation type="journal article" date="2007" name="Nat. Genet.">
        <title>Genomic analysis of Bartonella identifies type IV secretion systems as host adaptability factors.</title>
        <authorList>
            <person name="Saenz H.L."/>
            <person name="Engel P."/>
            <person name="Stoeckli M.C."/>
            <person name="Lanz C."/>
            <person name="Raddatz G."/>
            <person name="Vayssier-Taussat M."/>
            <person name="Birtles R."/>
            <person name="Schuster S.C."/>
            <person name="Dehio C."/>
        </authorList>
    </citation>
    <scope>NUCLEOTIDE SEQUENCE [LARGE SCALE GENOMIC DNA]</scope>
    <source>
        <strain>CIP 105476 / IBS 506</strain>
    </source>
</reference>
<feature type="chain" id="PRO_0000383414" description="L-lactate dehydrogenase">
    <location>
        <begin position="1"/>
        <end position="383"/>
    </location>
</feature>
<feature type="domain" description="FMN hydroxy acid dehydrogenase" evidence="1">
    <location>
        <begin position="1"/>
        <end position="380"/>
    </location>
</feature>
<feature type="active site" description="Proton acceptor" evidence="1">
    <location>
        <position position="275"/>
    </location>
</feature>
<feature type="binding site" evidence="1">
    <location>
        <position position="24"/>
    </location>
    <ligand>
        <name>substrate</name>
    </ligand>
</feature>
<feature type="binding site" evidence="1">
    <location>
        <position position="106"/>
    </location>
    <ligand>
        <name>FMN</name>
        <dbReference type="ChEBI" id="CHEBI:58210"/>
    </ligand>
</feature>
<feature type="binding site" evidence="1">
    <location>
        <position position="127"/>
    </location>
    <ligand>
        <name>FMN</name>
        <dbReference type="ChEBI" id="CHEBI:58210"/>
    </ligand>
</feature>
<feature type="binding site" evidence="1">
    <location>
        <position position="129"/>
    </location>
    <ligand>
        <name>substrate</name>
    </ligand>
</feature>
<feature type="binding site" evidence="1">
    <location>
        <position position="155"/>
    </location>
    <ligand>
        <name>FMN</name>
        <dbReference type="ChEBI" id="CHEBI:58210"/>
    </ligand>
</feature>
<feature type="binding site" evidence="1">
    <location>
        <position position="164"/>
    </location>
    <ligand>
        <name>substrate</name>
    </ligand>
</feature>
<feature type="binding site" evidence="1">
    <location>
        <position position="251"/>
    </location>
    <ligand>
        <name>FMN</name>
        <dbReference type="ChEBI" id="CHEBI:58210"/>
    </ligand>
</feature>
<feature type="binding site" evidence="1">
    <location>
        <position position="278"/>
    </location>
    <ligand>
        <name>substrate</name>
    </ligand>
</feature>
<feature type="binding site" evidence="1">
    <location>
        <begin position="306"/>
        <end position="330"/>
    </location>
    <ligand>
        <name>FMN</name>
        <dbReference type="ChEBI" id="CHEBI:58210"/>
    </ligand>
</feature>
<accession>A9IN89</accession>
<organism>
    <name type="scientific">Bartonella tribocorum (strain CIP 105476 / IBS 506)</name>
    <dbReference type="NCBI Taxonomy" id="382640"/>
    <lineage>
        <taxon>Bacteria</taxon>
        <taxon>Pseudomonadati</taxon>
        <taxon>Pseudomonadota</taxon>
        <taxon>Alphaproteobacteria</taxon>
        <taxon>Hyphomicrobiales</taxon>
        <taxon>Bartonellaceae</taxon>
        <taxon>Bartonella</taxon>
    </lineage>
</organism>
<protein>
    <recommendedName>
        <fullName evidence="1">L-lactate dehydrogenase</fullName>
        <ecNumber evidence="1">1.1.-.-</ecNumber>
    </recommendedName>
</protein>
<name>LLDD_BART1</name>
<keyword id="KW-0997">Cell inner membrane</keyword>
<keyword id="KW-1003">Cell membrane</keyword>
<keyword id="KW-0285">Flavoprotein</keyword>
<keyword id="KW-0288">FMN</keyword>
<keyword id="KW-0472">Membrane</keyword>
<keyword id="KW-0560">Oxidoreductase</keyword>
<proteinExistence type="inferred from homology"/>
<dbReference type="EC" id="1.1.-.-" evidence="1"/>
<dbReference type="EMBL" id="AM260525">
    <property type="protein sequence ID" value="CAK00766.1"/>
    <property type="molecule type" value="Genomic_DNA"/>
</dbReference>
<dbReference type="RefSeq" id="WP_012230738.1">
    <property type="nucleotide sequence ID" value="NC_010161.1"/>
</dbReference>
<dbReference type="SMR" id="A9IN89"/>
<dbReference type="KEGG" id="btr:BT_0300"/>
<dbReference type="eggNOG" id="COG1304">
    <property type="taxonomic scope" value="Bacteria"/>
</dbReference>
<dbReference type="HOGENOM" id="CLU_020639_0_0_5"/>
<dbReference type="Proteomes" id="UP000001592">
    <property type="component" value="Chromosome"/>
</dbReference>
<dbReference type="GO" id="GO:0005886">
    <property type="term" value="C:plasma membrane"/>
    <property type="evidence" value="ECO:0007669"/>
    <property type="project" value="UniProtKB-SubCell"/>
</dbReference>
<dbReference type="GO" id="GO:0010181">
    <property type="term" value="F:FMN binding"/>
    <property type="evidence" value="ECO:0007669"/>
    <property type="project" value="InterPro"/>
</dbReference>
<dbReference type="GO" id="GO:0004459">
    <property type="term" value="F:L-lactate dehydrogenase activity"/>
    <property type="evidence" value="ECO:0007669"/>
    <property type="project" value="UniProtKB-UniRule"/>
</dbReference>
<dbReference type="GO" id="GO:0009060">
    <property type="term" value="P:aerobic respiration"/>
    <property type="evidence" value="ECO:0007669"/>
    <property type="project" value="TreeGrafter"/>
</dbReference>
<dbReference type="GO" id="GO:0006089">
    <property type="term" value="P:lactate metabolic process"/>
    <property type="evidence" value="ECO:0007669"/>
    <property type="project" value="UniProtKB-UniRule"/>
</dbReference>
<dbReference type="CDD" id="cd02809">
    <property type="entry name" value="alpha_hydroxyacid_oxid_FMN"/>
    <property type="match status" value="1"/>
</dbReference>
<dbReference type="FunFam" id="3.20.20.70:FF:000029">
    <property type="entry name" value="L-lactate dehydrogenase"/>
    <property type="match status" value="1"/>
</dbReference>
<dbReference type="Gene3D" id="3.20.20.70">
    <property type="entry name" value="Aldolase class I"/>
    <property type="match status" value="1"/>
</dbReference>
<dbReference type="HAMAP" id="MF_01559">
    <property type="entry name" value="L_lact_dehydr"/>
    <property type="match status" value="1"/>
</dbReference>
<dbReference type="InterPro" id="IPR013785">
    <property type="entry name" value="Aldolase_TIM"/>
</dbReference>
<dbReference type="InterPro" id="IPR012133">
    <property type="entry name" value="Alpha-hydoxy_acid_DH_FMN"/>
</dbReference>
<dbReference type="InterPro" id="IPR000262">
    <property type="entry name" value="FMN-dep_DH"/>
</dbReference>
<dbReference type="InterPro" id="IPR037396">
    <property type="entry name" value="FMN_HAD"/>
</dbReference>
<dbReference type="InterPro" id="IPR008259">
    <property type="entry name" value="FMN_hydac_DH_AS"/>
</dbReference>
<dbReference type="InterPro" id="IPR020920">
    <property type="entry name" value="LldD"/>
</dbReference>
<dbReference type="NCBIfam" id="NF033901">
    <property type="entry name" value="L_lactate_LldD"/>
    <property type="match status" value="1"/>
</dbReference>
<dbReference type="NCBIfam" id="NF008398">
    <property type="entry name" value="PRK11197.1"/>
    <property type="match status" value="1"/>
</dbReference>
<dbReference type="PANTHER" id="PTHR10578:SF85">
    <property type="entry name" value="L-LACTATE DEHYDROGENASE"/>
    <property type="match status" value="1"/>
</dbReference>
<dbReference type="PANTHER" id="PTHR10578">
    <property type="entry name" value="S -2-HYDROXY-ACID OXIDASE-RELATED"/>
    <property type="match status" value="1"/>
</dbReference>
<dbReference type="Pfam" id="PF01070">
    <property type="entry name" value="FMN_dh"/>
    <property type="match status" value="1"/>
</dbReference>
<dbReference type="PIRSF" id="PIRSF000138">
    <property type="entry name" value="Al-hdrx_acd_dh"/>
    <property type="match status" value="1"/>
</dbReference>
<dbReference type="SUPFAM" id="SSF51395">
    <property type="entry name" value="FMN-linked oxidoreductases"/>
    <property type="match status" value="1"/>
</dbReference>
<dbReference type="PROSITE" id="PS00557">
    <property type="entry name" value="FMN_HYDROXY_ACID_DH_1"/>
    <property type="match status" value="1"/>
</dbReference>
<dbReference type="PROSITE" id="PS51349">
    <property type="entry name" value="FMN_HYDROXY_ACID_DH_2"/>
    <property type="match status" value="1"/>
</dbReference>
<sequence length="383" mass="41985">MIIASTFDYRKAAKRRLPPFLFHYIDGGAYAEETLRRNCSDLQALALRQRILRQVGGVDLSIKLFEQRLDLPIVLAPVGLTGMYARRGEVQAAHAATAKGIPFTLSSVSVCPIAEVQEAVGGGFWFQLYVLKDRGFMRDALERAWASGVRTLVFTVDMPIPGARYRDAHSGMSGPYAGLRRFLQAFTHPHWAWNVGIMGRPHDLGNVSTYLEKKIALDDYVGWLGANFDPSIGWHDLQWIRDFWKGKMILKGILDPEDAREAVQFGADGIVVSNHGGRQLDGVLSTARALPAIAEAVKNDLVILADSGVRSGLDVVRMIAQGADAVMIGRAFVYALAAAGEKGVAHLLDLFANEMRVAMTLTGAQTLKEITCESLVNTDAFKQ</sequence>
<evidence type="ECO:0000255" key="1">
    <source>
        <dbReference type="HAMAP-Rule" id="MF_01559"/>
    </source>
</evidence>
<gene>
    <name evidence="1" type="primary">lldD</name>
    <name type="ordered locus">BT_0300</name>
</gene>